<gene>
    <name evidence="1" type="primary">mdh</name>
    <name type="ordered locus">VV0467</name>
</gene>
<name>MDH_VIBVY</name>
<organism>
    <name type="scientific">Vibrio vulnificus (strain YJ016)</name>
    <dbReference type="NCBI Taxonomy" id="196600"/>
    <lineage>
        <taxon>Bacteria</taxon>
        <taxon>Pseudomonadati</taxon>
        <taxon>Pseudomonadota</taxon>
        <taxon>Gammaproteobacteria</taxon>
        <taxon>Vibrionales</taxon>
        <taxon>Vibrionaceae</taxon>
        <taxon>Vibrio</taxon>
    </lineage>
</organism>
<comment type="function">
    <text evidence="1">Catalyzes the reversible oxidation of malate to oxaloacetate.</text>
</comment>
<comment type="catalytic activity">
    <reaction evidence="1">
        <text>(S)-malate + NAD(+) = oxaloacetate + NADH + H(+)</text>
        <dbReference type="Rhea" id="RHEA:21432"/>
        <dbReference type="ChEBI" id="CHEBI:15378"/>
        <dbReference type="ChEBI" id="CHEBI:15589"/>
        <dbReference type="ChEBI" id="CHEBI:16452"/>
        <dbReference type="ChEBI" id="CHEBI:57540"/>
        <dbReference type="ChEBI" id="CHEBI:57945"/>
        <dbReference type="EC" id="1.1.1.37"/>
    </reaction>
</comment>
<comment type="subunit">
    <text evidence="1">Homodimer.</text>
</comment>
<comment type="similarity">
    <text evidence="1">Belongs to the LDH/MDH superfamily. MDH type 1 family.</text>
</comment>
<reference key="1">
    <citation type="journal article" date="2003" name="Genome Res.">
        <title>Comparative genome analysis of Vibrio vulnificus, a marine pathogen.</title>
        <authorList>
            <person name="Chen C.-Y."/>
            <person name="Wu K.-M."/>
            <person name="Chang Y.-C."/>
            <person name="Chang C.-H."/>
            <person name="Tsai H.-C."/>
            <person name="Liao T.-L."/>
            <person name="Liu Y.-M."/>
            <person name="Chen H.-J."/>
            <person name="Shen A.B.-T."/>
            <person name="Li J.-C."/>
            <person name="Su T.-L."/>
            <person name="Shao C.-P."/>
            <person name="Lee C.-T."/>
            <person name="Hor L.-I."/>
            <person name="Tsai S.-F."/>
        </authorList>
    </citation>
    <scope>NUCLEOTIDE SEQUENCE [LARGE SCALE GENOMIC DNA]</scope>
    <source>
        <strain>YJ016</strain>
    </source>
</reference>
<protein>
    <recommendedName>
        <fullName evidence="1">Malate dehydrogenase</fullName>
        <ecNumber evidence="1">1.1.1.37</ecNumber>
    </recommendedName>
</protein>
<sequence>MKVAVIGAAGGIGQALALLLKNRLPAGSDLALYDIAPVTPGVAADLSHIPTPVSIKGYAGEDPTPALEGADVVLISAGVARKPGMDRADLFNVNAGIVKSLAERIAVVCPNACIGIITNPVNTTVPIAAEVLKKAGVYDKRKLFGVTTLDVIRSETFVAELKGQDPGEVRVPVIGGHSGVTILPLLSQVEGVEFSDEEIAALTKRIQNAGTEVVEAKAGGGSATLSMGQAACRFGLALVKALQGEEVIEYAYVEGNGEHASFFAQPVKLGKEGVEEILPYGELSDFEKAALDGMLETLNGDIQIGVDFVK</sequence>
<keyword id="KW-0520">NAD</keyword>
<keyword id="KW-0560">Oxidoreductase</keyword>
<keyword id="KW-0816">Tricarboxylic acid cycle</keyword>
<proteinExistence type="inferred from homology"/>
<evidence type="ECO:0000255" key="1">
    <source>
        <dbReference type="HAMAP-Rule" id="MF_01516"/>
    </source>
</evidence>
<feature type="chain" id="PRO_0000113334" description="Malate dehydrogenase">
    <location>
        <begin position="1"/>
        <end position="310"/>
    </location>
</feature>
<feature type="active site" description="Proton acceptor" evidence="1">
    <location>
        <position position="177"/>
    </location>
</feature>
<feature type="binding site" evidence="1">
    <location>
        <begin position="7"/>
        <end position="13"/>
    </location>
    <ligand>
        <name>NAD(+)</name>
        <dbReference type="ChEBI" id="CHEBI:57540"/>
    </ligand>
</feature>
<feature type="binding site" evidence="1">
    <location>
        <position position="34"/>
    </location>
    <ligand>
        <name>NAD(+)</name>
        <dbReference type="ChEBI" id="CHEBI:57540"/>
    </ligand>
</feature>
<feature type="binding site" evidence="1">
    <location>
        <position position="81"/>
    </location>
    <ligand>
        <name>substrate</name>
    </ligand>
</feature>
<feature type="binding site" evidence="1">
    <location>
        <position position="87"/>
    </location>
    <ligand>
        <name>substrate</name>
    </ligand>
</feature>
<feature type="binding site" evidence="1">
    <location>
        <position position="94"/>
    </location>
    <ligand>
        <name>NAD(+)</name>
        <dbReference type="ChEBI" id="CHEBI:57540"/>
    </ligand>
</feature>
<feature type="binding site" evidence="1">
    <location>
        <begin position="117"/>
        <end position="119"/>
    </location>
    <ligand>
        <name>NAD(+)</name>
        <dbReference type="ChEBI" id="CHEBI:57540"/>
    </ligand>
</feature>
<feature type="binding site" evidence="1">
    <location>
        <position position="119"/>
    </location>
    <ligand>
        <name>substrate</name>
    </ligand>
</feature>
<feature type="binding site" evidence="1">
    <location>
        <position position="153"/>
    </location>
    <ligand>
        <name>substrate</name>
    </ligand>
</feature>
<feature type="binding site" evidence="1">
    <location>
        <position position="227"/>
    </location>
    <ligand>
        <name>NAD(+)</name>
        <dbReference type="ChEBI" id="CHEBI:57540"/>
    </ligand>
</feature>
<accession>Q7MP97</accession>
<dbReference type="EC" id="1.1.1.37" evidence="1"/>
<dbReference type="EMBL" id="BA000037">
    <property type="protein sequence ID" value="BAC93231.1"/>
    <property type="molecule type" value="Genomic_DNA"/>
</dbReference>
<dbReference type="RefSeq" id="WP_011149389.1">
    <property type="nucleotide sequence ID" value="NC_005139.1"/>
</dbReference>
<dbReference type="SMR" id="Q7MP97"/>
<dbReference type="STRING" id="672.VV93_v1c04350"/>
<dbReference type="KEGG" id="vvy:VV0467"/>
<dbReference type="PATRIC" id="fig|196600.6.peg.494"/>
<dbReference type="eggNOG" id="COG0039">
    <property type="taxonomic scope" value="Bacteria"/>
</dbReference>
<dbReference type="HOGENOM" id="CLU_047181_1_0_6"/>
<dbReference type="Proteomes" id="UP000002675">
    <property type="component" value="Chromosome I"/>
</dbReference>
<dbReference type="GO" id="GO:0005737">
    <property type="term" value="C:cytoplasm"/>
    <property type="evidence" value="ECO:0007669"/>
    <property type="project" value="TreeGrafter"/>
</dbReference>
<dbReference type="GO" id="GO:0030060">
    <property type="term" value="F:L-malate dehydrogenase (NAD+) activity"/>
    <property type="evidence" value="ECO:0007669"/>
    <property type="project" value="UniProtKB-UniRule"/>
</dbReference>
<dbReference type="GO" id="GO:0006108">
    <property type="term" value="P:malate metabolic process"/>
    <property type="evidence" value="ECO:0007669"/>
    <property type="project" value="InterPro"/>
</dbReference>
<dbReference type="GO" id="GO:0006099">
    <property type="term" value="P:tricarboxylic acid cycle"/>
    <property type="evidence" value="ECO:0007669"/>
    <property type="project" value="UniProtKB-UniRule"/>
</dbReference>
<dbReference type="CDD" id="cd01337">
    <property type="entry name" value="MDH_glyoxysomal_mitochondrial"/>
    <property type="match status" value="1"/>
</dbReference>
<dbReference type="FunFam" id="3.40.50.720:FF:000017">
    <property type="entry name" value="Malate dehydrogenase"/>
    <property type="match status" value="1"/>
</dbReference>
<dbReference type="FunFam" id="3.90.110.10:FF:000001">
    <property type="entry name" value="Malate dehydrogenase"/>
    <property type="match status" value="1"/>
</dbReference>
<dbReference type="Gene3D" id="3.90.110.10">
    <property type="entry name" value="Lactate dehydrogenase/glycoside hydrolase, family 4, C-terminal"/>
    <property type="match status" value="1"/>
</dbReference>
<dbReference type="Gene3D" id="3.40.50.720">
    <property type="entry name" value="NAD(P)-binding Rossmann-like Domain"/>
    <property type="match status" value="1"/>
</dbReference>
<dbReference type="HAMAP" id="MF_01516">
    <property type="entry name" value="Malate_dehydrog_1"/>
    <property type="match status" value="1"/>
</dbReference>
<dbReference type="InterPro" id="IPR001557">
    <property type="entry name" value="L-lactate/malate_DH"/>
</dbReference>
<dbReference type="InterPro" id="IPR022383">
    <property type="entry name" value="Lactate/malate_DH_C"/>
</dbReference>
<dbReference type="InterPro" id="IPR001236">
    <property type="entry name" value="Lactate/malate_DH_N"/>
</dbReference>
<dbReference type="InterPro" id="IPR015955">
    <property type="entry name" value="Lactate_DH/Glyco_Ohase_4_C"/>
</dbReference>
<dbReference type="InterPro" id="IPR001252">
    <property type="entry name" value="Malate_DH_AS"/>
</dbReference>
<dbReference type="InterPro" id="IPR010097">
    <property type="entry name" value="Malate_DH_type1"/>
</dbReference>
<dbReference type="InterPro" id="IPR023958">
    <property type="entry name" value="Malate_DH_type1_bac"/>
</dbReference>
<dbReference type="InterPro" id="IPR036291">
    <property type="entry name" value="NAD(P)-bd_dom_sf"/>
</dbReference>
<dbReference type="NCBIfam" id="TIGR01772">
    <property type="entry name" value="MDH_euk_gproteo"/>
    <property type="match status" value="1"/>
</dbReference>
<dbReference type="PANTHER" id="PTHR11540">
    <property type="entry name" value="MALATE AND LACTATE DEHYDROGENASE"/>
    <property type="match status" value="1"/>
</dbReference>
<dbReference type="PANTHER" id="PTHR11540:SF16">
    <property type="entry name" value="MALATE DEHYDROGENASE, MITOCHONDRIAL"/>
    <property type="match status" value="1"/>
</dbReference>
<dbReference type="Pfam" id="PF02866">
    <property type="entry name" value="Ldh_1_C"/>
    <property type="match status" value="1"/>
</dbReference>
<dbReference type="Pfam" id="PF00056">
    <property type="entry name" value="Ldh_1_N"/>
    <property type="match status" value="1"/>
</dbReference>
<dbReference type="PIRSF" id="PIRSF000102">
    <property type="entry name" value="Lac_mal_DH"/>
    <property type="match status" value="1"/>
</dbReference>
<dbReference type="SUPFAM" id="SSF56327">
    <property type="entry name" value="LDH C-terminal domain-like"/>
    <property type="match status" value="1"/>
</dbReference>
<dbReference type="SUPFAM" id="SSF51735">
    <property type="entry name" value="NAD(P)-binding Rossmann-fold domains"/>
    <property type="match status" value="1"/>
</dbReference>
<dbReference type="PROSITE" id="PS00068">
    <property type="entry name" value="MDH"/>
    <property type="match status" value="1"/>
</dbReference>